<gene>
    <name type="primary">tamm41</name>
</gene>
<keyword id="KW-0444">Lipid biosynthesis</keyword>
<keyword id="KW-0443">Lipid metabolism</keyword>
<keyword id="KW-0460">Magnesium</keyword>
<keyword id="KW-0472">Membrane</keyword>
<keyword id="KW-0496">Mitochondrion</keyword>
<keyword id="KW-0999">Mitochondrion inner membrane</keyword>
<keyword id="KW-0548">Nucleotidyltransferase</keyword>
<keyword id="KW-0594">Phospholipid biosynthesis</keyword>
<keyword id="KW-1208">Phospholipid metabolism</keyword>
<keyword id="KW-1185">Reference proteome</keyword>
<keyword id="KW-0808">Transferase</keyword>
<dbReference type="EC" id="2.7.7.41" evidence="1"/>
<dbReference type="EMBL" id="BC075154">
    <property type="protein sequence ID" value="AAH75154.1"/>
    <property type="molecule type" value="mRNA"/>
</dbReference>
<dbReference type="SMR" id="Q6DJM2"/>
<dbReference type="OrthoDB" id="341477at2759"/>
<dbReference type="UniPathway" id="UPA00557">
    <property type="reaction ID" value="UER00614"/>
</dbReference>
<dbReference type="Proteomes" id="UP000186698">
    <property type="component" value="Unplaced"/>
</dbReference>
<dbReference type="GO" id="GO:0005743">
    <property type="term" value="C:mitochondrial inner membrane"/>
    <property type="evidence" value="ECO:0000250"/>
    <property type="project" value="UniProtKB"/>
</dbReference>
<dbReference type="GO" id="GO:0005739">
    <property type="term" value="C:mitochondrion"/>
    <property type="evidence" value="ECO:0000318"/>
    <property type="project" value="GO_Central"/>
</dbReference>
<dbReference type="GO" id="GO:0004605">
    <property type="term" value="F:phosphatidate cytidylyltransferase activity"/>
    <property type="evidence" value="ECO:0000250"/>
    <property type="project" value="UniProtKB"/>
</dbReference>
<dbReference type="GO" id="GO:0032049">
    <property type="term" value="P:cardiolipin biosynthetic process"/>
    <property type="evidence" value="ECO:0000250"/>
    <property type="project" value="UniProtKB"/>
</dbReference>
<dbReference type="GO" id="GO:0016024">
    <property type="term" value="P:CDP-diacylglycerol biosynthetic process"/>
    <property type="evidence" value="ECO:0000318"/>
    <property type="project" value="GO_Central"/>
</dbReference>
<dbReference type="InterPro" id="IPR015222">
    <property type="entry name" value="Tam41"/>
</dbReference>
<dbReference type="PANTHER" id="PTHR13619">
    <property type="entry name" value="PHOSPHATIDATE CYTIDYLYLTRANSFERASE, MITOCHONDRIAL"/>
    <property type="match status" value="1"/>
</dbReference>
<dbReference type="PANTHER" id="PTHR13619:SF0">
    <property type="entry name" value="PHOSPHATIDATE CYTIDYLYLTRANSFERASE, MITOCHONDRIAL"/>
    <property type="match status" value="1"/>
</dbReference>
<dbReference type="Pfam" id="PF09139">
    <property type="entry name" value="Tam41_Mmp37"/>
    <property type="match status" value="1"/>
</dbReference>
<dbReference type="PIRSF" id="PIRSF028840">
    <property type="entry name" value="Mmp37"/>
    <property type="match status" value="1"/>
</dbReference>
<comment type="function">
    <text evidence="1">Catalyzes the conversion of phosphatidic acid (PA) to CDP-diacylglycerol (CDP-DAG), an essential intermediate in the synthesis of phosphatidylglycerol, cardiolipin and phosphatidylinositol.</text>
</comment>
<comment type="catalytic activity">
    <reaction evidence="1">
        <text>a 1,2-diacyl-sn-glycero-3-phosphate + CTP + H(+) = a CDP-1,2-diacyl-sn-glycerol + diphosphate</text>
        <dbReference type="Rhea" id="RHEA:16229"/>
        <dbReference type="ChEBI" id="CHEBI:15378"/>
        <dbReference type="ChEBI" id="CHEBI:33019"/>
        <dbReference type="ChEBI" id="CHEBI:37563"/>
        <dbReference type="ChEBI" id="CHEBI:58332"/>
        <dbReference type="ChEBI" id="CHEBI:58608"/>
        <dbReference type="EC" id="2.7.7.41"/>
    </reaction>
</comment>
<comment type="cofactor">
    <cofactor evidence="2">
        <name>Mg(2+)</name>
        <dbReference type="ChEBI" id="CHEBI:18420"/>
    </cofactor>
</comment>
<comment type="pathway">
    <text evidence="1">Phospholipid metabolism; CDP-diacylglycerol biosynthesis; CDP-diacylglycerol from sn-glycerol 3-phosphate: step 3/3.</text>
</comment>
<comment type="subcellular location">
    <subcellularLocation>
        <location evidence="1">Mitochondrion inner membrane</location>
        <topology evidence="1">Peripheral membrane protein</topology>
        <orientation evidence="2">Matrix side</orientation>
    </subcellularLocation>
</comment>
<comment type="similarity">
    <text evidence="3">Belongs to the TAM41 family.</text>
</comment>
<feature type="chain" id="PRO_0000248357" description="Phosphatidate cytidylyltransferase, mitochondrial">
    <location>
        <begin position="1"/>
        <end position="338"/>
    </location>
</feature>
<organism>
    <name type="scientific">Xenopus laevis</name>
    <name type="common">African clawed frog</name>
    <dbReference type="NCBI Taxonomy" id="8355"/>
    <lineage>
        <taxon>Eukaryota</taxon>
        <taxon>Metazoa</taxon>
        <taxon>Chordata</taxon>
        <taxon>Craniata</taxon>
        <taxon>Vertebrata</taxon>
        <taxon>Euteleostomi</taxon>
        <taxon>Amphibia</taxon>
        <taxon>Batrachia</taxon>
        <taxon>Anura</taxon>
        <taxon>Pipoidea</taxon>
        <taxon>Pipidae</taxon>
        <taxon>Xenopodinae</taxon>
        <taxon>Xenopus</taxon>
        <taxon>Xenopus</taxon>
    </lineage>
</organism>
<proteinExistence type="evidence at transcript level"/>
<sequence length="338" mass="37893">MSLPVLQGTGFQFRRILSFFPQDISLAFTYGSGVFRQAGSSHNDVRNKMLDFVFAVDDPVTWHTMNIIQNRSHYSFLKFLGPKHITAVQNNYGAGVYYNTLVPCDGRLIKYGVVSTETLLQDLLHWRTLYIAGRLHKPVKILTQRDDGRLKSALTSNLKSALNAAFLMLPESFSEEELYLQIAGLSYAGDFRMIIGEDKDKVLNIVKPNVPHFQKLYAAILLDCPLAVYKAQQGRVEVDKSPEGQYQQLMALPKKLQQNITALVDPPGKNRDVEEILLQVAQDPDCSSVIQQALYGIVRSSSLSQSAKGIVTAGVKKSVQYSSKKLYKMLRSLRRGKS</sequence>
<accession>Q6DJM2</accession>
<protein>
    <recommendedName>
        <fullName>Phosphatidate cytidylyltransferase, mitochondrial</fullName>
        <ecNumber evidence="1">2.7.7.41</ecNumber>
    </recommendedName>
    <alternativeName>
        <fullName>CDP-diacylglycerol synthase</fullName>
        <shortName>CDP-DAG synthase</shortName>
    </alternativeName>
    <alternativeName>
        <fullName>Mitochondrial translocator assembly and maintenance protein 41 homolog</fullName>
        <shortName>TAM41</shortName>
    </alternativeName>
</protein>
<name>TAM41_XENLA</name>
<reference key="1">
    <citation type="submission" date="2004-06" db="EMBL/GenBank/DDBJ databases">
        <authorList>
            <consortium name="NIH - Xenopus Gene Collection (XGC) project"/>
        </authorList>
    </citation>
    <scope>NUCLEOTIDE SEQUENCE [LARGE SCALE MRNA]</scope>
    <source>
        <tissue>Kidney</tissue>
    </source>
</reference>
<evidence type="ECO:0000250" key="1">
    <source>
        <dbReference type="UniProtKB" id="D3ZKT0"/>
    </source>
</evidence>
<evidence type="ECO:0000250" key="2">
    <source>
        <dbReference type="UniProtKB" id="P53230"/>
    </source>
</evidence>
<evidence type="ECO:0000305" key="3"/>